<protein>
    <recommendedName>
        <fullName evidence="1">Orotate phosphoribosyltransferase</fullName>
        <shortName evidence="1">OPRT</shortName>
        <shortName evidence="1">OPRTase</shortName>
        <ecNumber evidence="1">2.4.2.10</ecNumber>
    </recommendedName>
</protein>
<proteinExistence type="evidence at transcript level"/>
<reference key="1">
    <citation type="journal article" date="1994" name="Microbiology">
        <title>Molecular characterization of pyrimidine biosynthesis genes from the thermophile Bacillus caldolyticus.</title>
        <authorList>
            <person name="Ghim S.Y."/>
            <person name="Nielsen P."/>
            <person name="Neuhard J."/>
        </authorList>
    </citation>
    <scope>NUCLEOTIDE SEQUENCE [GENOMIC DNA]</scope>
    <scope>INDUCTION</scope>
    <source>
        <strain>DSM 405 / NBRC 15313 / YP-T</strain>
    </source>
</reference>
<organism>
    <name type="scientific">Bacillus caldolyticus</name>
    <dbReference type="NCBI Taxonomy" id="1394"/>
    <lineage>
        <taxon>Bacteria</taxon>
        <taxon>Bacillati</taxon>
        <taxon>Bacillota</taxon>
        <taxon>Bacilli</taxon>
        <taxon>Bacillales</taxon>
        <taxon>Anoxybacillaceae</taxon>
        <taxon>Geobacillus</taxon>
        <taxon>Geobacillus thermoleovorans group</taxon>
    </lineage>
</organism>
<keyword id="KW-0328">Glycosyltransferase</keyword>
<keyword id="KW-0460">Magnesium</keyword>
<keyword id="KW-0665">Pyrimidine biosynthesis</keyword>
<keyword id="KW-0808">Transferase</keyword>
<sequence length="206" mass="22402">MKHDIAAKLLQIGAVALQPNEPFTWSSGLKSPIYCDNRLTLAYPGVRRLIADALAELIRTHFPKADLIAGTAAGIPHAAWVSERLELPMCYVRSQAKRHGKGKQIEGQARPGQRVVVIEDLISTGGTSLAAVRALKEAGCEVLGVAAIFTYGLEKAKQAFAAENLPAYTLTDYNTLIETAVRLGAVSEHDLATLRQWRENPEEWGS</sequence>
<name>PYRE_BACCL</name>
<feature type="chain" id="PRO_0000110666" description="Orotate phosphoribosyltransferase">
    <location>
        <begin position="1"/>
        <end position="206"/>
    </location>
</feature>
<feature type="binding site" evidence="1">
    <location>
        <position position="93"/>
    </location>
    <ligand>
        <name>5-phospho-alpha-D-ribose 1-diphosphate</name>
        <dbReference type="ChEBI" id="CHEBI:58017"/>
        <note>ligand shared between dimeric partners</note>
    </ligand>
</feature>
<feature type="binding site" evidence="1">
    <location>
        <position position="97"/>
    </location>
    <ligand>
        <name>5-phospho-alpha-D-ribose 1-diphosphate</name>
        <dbReference type="ChEBI" id="CHEBI:58017"/>
        <note>ligand shared between dimeric partners</note>
    </ligand>
</feature>
<feature type="binding site" evidence="1">
    <location>
        <position position="99"/>
    </location>
    <ligand>
        <name>5-phospho-alpha-D-ribose 1-diphosphate</name>
        <dbReference type="ChEBI" id="CHEBI:58017"/>
        <note>ligand shared between dimeric partners</note>
    </ligand>
</feature>
<feature type="binding site" description="in other chain" evidence="1">
    <location>
        <begin position="119"/>
        <end position="127"/>
    </location>
    <ligand>
        <name>5-phospho-alpha-D-ribose 1-diphosphate</name>
        <dbReference type="ChEBI" id="CHEBI:58017"/>
        <note>ligand shared between dimeric partners</note>
    </ligand>
</feature>
<feature type="binding site" evidence="1">
    <location>
        <position position="123"/>
    </location>
    <ligand>
        <name>orotate</name>
        <dbReference type="ChEBI" id="CHEBI:30839"/>
    </ligand>
</feature>
<dbReference type="EC" id="2.4.2.10" evidence="1"/>
<dbReference type="EMBL" id="X73308">
    <property type="protein sequence ID" value="CAA51743.1"/>
    <property type="molecule type" value="Genomic_DNA"/>
</dbReference>
<dbReference type="PIR" id="I40173">
    <property type="entry name" value="I40173"/>
</dbReference>
<dbReference type="SMR" id="P46534"/>
<dbReference type="UniPathway" id="UPA00070">
    <property type="reaction ID" value="UER00119"/>
</dbReference>
<dbReference type="GO" id="GO:0000287">
    <property type="term" value="F:magnesium ion binding"/>
    <property type="evidence" value="ECO:0007669"/>
    <property type="project" value="UniProtKB-UniRule"/>
</dbReference>
<dbReference type="GO" id="GO:0004588">
    <property type="term" value="F:orotate phosphoribosyltransferase activity"/>
    <property type="evidence" value="ECO:0007669"/>
    <property type="project" value="UniProtKB-UniRule"/>
</dbReference>
<dbReference type="GO" id="GO:0044205">
    <property type="term" value="P:'de novo' UMP biosynthetic process"/>
    <property type="evidence" value="ECO:0007669"/>
    <property type="project" value="UniProtKB-UniRule"/>
</dbReference>
<dbReference type="GO" id="GO:0019856">
    <property type="term" value="P:pyrimidine nucleobase biosynthetic process"/>
    <property type="evidence" value="ECO:0007669"/>
    <property type="project" value="TreeGrafter"/>
</dbReference>
<dbReference type="CDD" id="cd06223">
    <property type="entry name" value="PRTases_typeI"/>
    <property type="match status" value="1"/>
</dbReference>
<dbReference type="Gene3D" id="3.40.50.2020">
    <property type="match status" value="1"/>
</dbReference>
<dbReference type="HAMAP" id="MF_01208">
    <property type="entry name" value="PyrE"/>
    <property type="match status" value="1"/>
</dbReference>
<dbReference type="InterPro" id="IPR023031">
    <property type="entry name" value="OPRT"/>
</dbReference>
<dbReference type="InterPro" id="IPR004467">
    <property type="entry name" value="Or_phspho_trans_dom"/>
</dbReference>
<dbReference type="InterPro" id="IPR000836">
    <property type="entry name" value="PRibTrfase_dom"/>
</dbReference>
<dbReference type="InterPro" id="IPR029057">
    <property type="entry name" value="PRTase-like"/>
</dbReference>
<dbReference type="NCBIfam" id="TIGR00336">
    <property type="entry name" value="pyrE"/>
    <property type="match status" value="1"/>
</dbReference>
<dbReference type="PANTHER" id="PTHR19278">
    <property type="entry name" value="OROTATE PHOSPHORIBOSYLTRANSFERASE"/>
    <property type="match status" value="1"/>
</dbReference>
<dbReference type="PANTHER" id="PTHR19278:SF9">
    <property type="entry name" value="URIDINE 5'-MONOPHOSPHATE SYNTHASE"/>
    <property type="match status" value="1"/>
</dbReference>
<dbReference type="Pfam" id="PF00156">
    <property type="entry name" value="Pribosyltran"/>
    <property type="match status" value="1"/>
</dbReference>
<dbReference type="SUPFAM" id="SSF53271">
    <property type="entry name" value="PRTase-like"/>
    <property type="match status" value="1"/>
</dbReference>
<dbReference type="PROSITE" id="PS00103">
    <property type="entry name" value="PUR_PYR_PR_TRANSFER"/>
    <property type="match status" value="1"/>
</dbReference>
<comment type="function">
    <text evidence="1">Catalyzes the transfer of a ribosyl phosphate group from 5-phosphoribose 1-diphosphate to orotate, leading to the formation of orotidine monophosphate (OMP).</text>
</comment>
<comment type="catalytic activity">
    <reaction evidence="1">
        <text>orotidine 5'-phosphate + diphosphate = orotate + 5-phospho-alpha-D-ribose 1-diphosphate</text>
        <dbReference type="Rhea" id="RHEA:10380"/>
        <dbReference type="ChEBI" id="CHEBI:30839"/>
        <dbReference type="ChEBI" id="CHEBI:33019"/>
        <dbReference type="ChEBI" id="CHEBI:57538"/>
        <dbReference type="ChEBI" id="CHEBI:58017"/>
        <dbReference type="EC" id="2.4.2.10"/>
    </reaction>
</comment>
<comment type="cofactor">
    <cofactor evidence="1">
        <name>Mg(2+)</name>
        <dbReference type="ChEBI" id="CHEBI:18420"/>
    </cofactor>
</comment>
<comment type="pathway">
    <text evidence="1">Pyrimidine metabolism; UMP biosynthesis via de novo pathway; UMP from orotate: step 1/2.</text>
</comment>
<comment type="subunit">
    <text evidence="1">Homodimer.</text>
</comment>
<comment type="induction">
    <text evidence="2">Repressed by uracil.</text>
</comment>
<comment type="similarity">
    <text evidence="1">Belongs to the purine/pyrimidine phosphoribosyltransferase family. PyrE subfamily.</text>
</comment>
<evidence type="ECO:0000255" key="1">
    <source>
        <dbReference type="HAMAP-Rule" id="MF_01208"/>
    </source>
</evidence>
<evidence type="ECO:0000269" key="2">
    <source>
    </source>
</evidence>
<gene>
    <name evidence="1" type="primary">pyrE</name>
</gene>
<accession>P46534</accession>